<sequence length="445" mass="46348">MPVGRSLSLDPNLLAQLQSHSPTLWLNPHQGMPLPDFAPTAADLADADARLRRCAGLLAELFAELRPSGGLIASPLQPAEPLKRAARAGHAQAGAWYVKRDDVLPVAGSIKARGGFHEVLALAESIAERHGLAGADTDRRALASGAARARFARHTVMVGSTGNLGLSIGMLASALGFRTVVHMSADAKAWKKARLRTRGVEVVEHAGDYAKAVDAGRRQAAGMPCCHFVDDEGSRMLFLGYATAAAELAAQLAQAGRPVDARHPLFVHLPCGVGGAPGGIVYGLKALYGEHVHAFVAEPTASPCVLVQLAGDAAHPRSVYDIGLDNRTEADGLAVAQASPLAAALLRAQAAGAFTVDDRQLFAHLLDARERLGIDLEPSAAAAFGGPAWIAGSDAGRAYLRGRGIDPDAATHVIWATGGSLVPAQEHRRFQAHARAQRQVGGAGA</sequence>
<protein>
    <recommendedName>
        <fullName evidence="1">Probable D-serine dehydratase</fullName>
        <ecNumber evidence="1">4.3.1.18</ecNumber>
    </recommendedName>
    <alternativeName>
        <fullName evidence="1">D-serine deaminase</fullName>
        <shortName evidence="1">DSD</shortName>
    </alternativeName>
</protein>
<comment type="catalytic activity">
    <reaction evidence="1">
        <text>D-serine = pyruvate + NH4(+)</text>
        <dbReference type="Rhea" id="RHEA:13977"/>
        <dbReference type="ChEBI" id="CHEBI:15361"/>
        <dbReference type="ChEBI" id="CHEBI:28938"/>
        <dbReference type="ChEBI" id="CHEBI:35247"/>
        <dbReference type="EC" id="4.3.1.18"/>
    </reaction>
</comment>
<comment type="cofactor">
    <cofactor evidence="1">
        <name>pyridoxal 5'-phosphate</name>
        <dbReference type="ChEBI" id="CHEBI:597326"/>
    </cofactor>
</comment>
<comment type="similarity">
    <text evidence="1">Belongs to the serine/threonine dehydratase family. DsdA subfamily.</text>
</comment>
<gene>
    <name evidence="1" type="primary">dsdA</name>
    <name type="ordered locus">BURPS1106A_A2856</name>
</gene>
<evidence type="ECO:0000255" key="1">
    <source>
        <dbReference type="HAMAP-Rule" id="MF_01030"/>
    </source>
</evidence>
<accession>A3P975</accession>
<reference key="1">
    <citation type="journal article" date="2010" name="Genome Biol. Evol.">
        <title>Continuing evolution of Burkholderia mallei through genome reduction and large-scale rearrangements.</title>
        <authorList>
            <person name="Losada L."/>
            <person name="Ronning C.M."/>
            <person name="DeShazer D."/>
            <person name="Woods D."/>
            <person name="Fedorova N."/>
            <person name="Kim H.S."/>
            <person name="Shabalina S.A."/>
            <person name="Pearson T.R."/>
            <person name="Brinkac L."/>
            <person name="Tan P."/>
            <person name="Nandi T."/>
            <person name="Crabtree J."/>
            <person name="Badger J."/>
            <person name="Beckstrom-Sternberg S."/>
            <person name="Saqib M."/>
            <person name="Schutzer S.E."/>
            <person name="Keim P."/>
            <person name="Nierman W.C."/>
        </authorList>
    </citation>
    <scope>NUCLEOTIDE SEQUENCE [LARGE SCALE GENOMIC DNA]</scope>
    <source>
        <strain>1106a</strain>
    </source>
</reference>
<organism>
    <name type="scientific">Burkholderia pseudomallei (strain 1106a)</name>
    <dbReference type="NCBI Taxonomy" id="357348"/>
    <lineage>
        <taxon>Bacteria</taxon>
        <taxon>Pseudomonadati</taxon>
        <taxon>Pseudomonadota</taxon>
        <taxon>Betaproteobacteria</taxon>
        <taxon>Burkholderiales</taxon>
        <taxon>Burkholderiaceae</taxon>
        <taxon>Burkholderia</taxon>
        <taxon>pseudomallei group</taxon>
    </lineage>
</organism>
<feature type="chain" id="PRO_1000063708" description="Probable D-serine dehydratase">
    <location>
        <begin position="1"/>
        <end position="445"/>
    </location>
</feature>
<feature type="modified residue" description="N6-(pyridoxal phosphate)lysine" evidence="1">
    <location>
        <position position="111"/>
    </location>
</feature>
<keyword id="KW-0456">Lyase</keyword>
<keyword id="KW-0663">Pyridoxal phosphate</keyword>
<proteinExistence type="inferred from homology"/>
<dbReference type="EC" id="4.3.1.18" evidence="1"/>
<dbReference type="EMBL" id="CP000573">
    <property type="protein sequence ID" value="ABN93427.1"/>
    <property type="molecule type" value="Genomic_DNA"/>
</dbReference>
<dbReference type="RefSeq" id="WP_004537039.1">
    <property type="nucleotide sequence ID" value="NC_009078.1"/>
</dbReference>
<dbReference type="SMR" id="A3P975"/>
<dbReference type="KEGG" id="bpl:BURPS1106A_A2856"/>
<dbReference type="HOGENOM" id="CLU_035707_0_0_4"/>
<dbReference type="Proteomes" id="UP000006738">
    <property type="component" value="Chromosome II"/>
</dbReference>
<dbReference type="GO" id="GO:0008721">
    <property type="term" value="F:D-serine ammonia-lyase activity"/>
    <property type="evidence" value="ECO:0007669"/>
    <property type="project" value="UniProtKB-EC"/>
</dbReference>
<dbReference type="GO" id="GO:0016836">
    <property type="term" value="F:hydro-lyase activity"/>
    <property type="evidence" value="ECO:0007669"/>
    <property type="project" value="UniProtKB-UniRule"/>
</dbReference>
<dbReference type="GO" id="GO:0030170">
    <property type="term" value="F:pyridoxal phosphate binding"/>
    <property type="evidence" value="ECO:0007669"/>
    <property type="project" value="InterPro"/>
</dbReference>
<dbReference type="GO" id="GO:0036088">
    <property type="term" value="P:D-serine catabolic process"/>
    <property type="evidence" value="ECO:0007669"/>
    <property type="project" value="TreeGrafter"/>
</dbReference>
<dbReference type="GO" id="GO:0009097">
    <property type="term" value="P:isoleucine biosynthetic process"/>
    <property type="evidence" value="ECO:0007669"/>
    <property type="project" value="TreeGrafter"/>
</dbReference>
<dbReference type="Gene3D" id="3.40.50.1100">
    <property type="match status" value="2"/>
</dbReference>
<dbReference type="HAMAP" id="MF_01030">
    <property type="entry name" value="D_Ser_dehydrat"/>
    <property type="match status" value="1"/>
</dbReference>
<dbReference type="InterPro" id="IPR011780">
    <property type="entry name" value="D_Ser_am_lyase"/>
</dbReference>
<dbReference type="InterPro" id="IPR050147">
    <property type="entry name" value="Ser/Thr_Dehydratase"/>
</dbReference>
<dbReference type="InterPro" id="IPR001926">
    <property type="entry name" value="TrpB-like_PALP"/>
</dbReference>
<dbReference type="InterPro" id="IPR036052">
    <property type="entry name" value="TrpB-like_PALP_sf"/>
</dbReference>
<dbReference type="NCBIfam" id="TIGR02035">
    <property type="entry name" value="D_Ser_am_lyase"/>
    <property type="match status" value="1"/>
</dbReference>
<dbReference type="NCBIfam" id="NF002823">
    <property type="entry name" value="PRK02991.1"/>
    <property type="match status" value="1"/>
</dbReference>
<dbReference type="PANTHER" id="PTHR48078:SF9">
    <property type="entry name" value="D-SERINE DEHYDRATASE"/>
    <property type="match status" value="1"/>
</dbReference>
<dbReference type="PANTHER" id="PTHR48078">
    <property type="entry name" value="THREONINE DEHYDRATASE, MITOCHONDRIAL-RELATED"/>
    <property type="match status" value="1"/>
</dbReference>
<dbReference type="Pfam" id="PF00291">
    <property type="entry name" value="PALP"/>
    <property type="match status" value="1"/>
</dbReference>
<dbReference type="SUPFAM" id="SSF53686">
    <property type="entry name" value="Tryptophan synthase beta subunit-like PLP-dependent enzymes"/>
    <property type="match status" value="1"/>
</dbReference>
<name>SDHD_BURP0</name>